<sequence length="116" mass="12871">MYKQVIVVRGDLKLSRGKLAAQVAHASLGAFLRAKESGAPVEEWLREGQKKVVLKCKDKEELLELHELAKRRGLPSFLVRDAGLTELEPGTVTCLGIGPEREEEIDRVTGDLPLLR</sequence>
<accession>Q8TV04</accession>
<feature type="chain" id="PRO_0000120293" description="Peptidyl-tRNA hydrolase">
    <location>
        <begin position="1"/>
        <end position="116"/>
    </location>
</feature>
<evidence type="ECO:0000255" key="1">
    <source>
        <dbReference type="HAMAP-Rule" id="MF_00628"/>
    </source>
</evidence>
<gene>
    <name evidence="1" type="primary">pth</name>
    <name type="ordered locus">MK1597</name>
</gene>
<keyword id="KW-0963">Cytoplasm</keyword>
<keyword id="KW-0378">Hydrolase</keyword>
<keyword id="KW-1185">Reference proteome</keyword>
<reference key="1">
    <citation type="journal article" date="2002" name="Proc. Natl. Acad. Sci. U.S.A.">
        <title>The complete genome of hyperthermophile Methanopyrus kandleri AV19 and monophyly of archaeal methanogens.</title>
        <authorList>
            <person name="Slesarev A.I."/>
            <person name="Mezhevaya K.V."/>
            <person name="Makarova K.S."/>
            <person name="Polushin N.N."/>
            <person name="Shcherbinina O.V."/>
            <person name="Shakhova V.V."/>
            <person name="Belova G.I."/>
            <person name="Aravind L."/>
            <person name="Natale D.A."/>
            <person name="Rogozin I.B."/>
            <person name="Tatusov R.L."/>
            <person name="Wolf Y.I."/>
            <person name="Stetter K.O."/>
            <person name="Malykh A.G."/>
            <person name="Koonin E.V."/>
            <person name="Kozyavkin S.A."/>
        </authorList>
    </citation>
    <scope>NUCLEOTIDE SEQUENCE [LARGE SCALE GENOMIC DNA]</scope>
    <source>
        <strain>AV19 / DSM 6324 / JCM 9639 / NBRC 100938</strain>
    </source>
</reference>
<proteinExistence type="inferred from homology"/>
<comment type="function">
    <text evidence="1">The natural substrate for this enzyme may be peptidyl-tRNAs which drop off the ribosome during protein synthesis.</text>
</comment>
<comment type="catalytic activity">
    <reaction evidence="1">
        <text>an N-acyl-L-alpha-aminoacyl-tRNA + H2O = an N-acyl-L-amino acid + a tRNA + H(+)</text>
        <dbReference type="Rhea" id="RHEA:54448"/>
        <dbReference type="Rhea" id="RHEA-COMP:10123"/>
        <dbReference type="Rhea" id="RHEA-COMP:13883"/>
        <dbReference type="ChEBI" id="CHEBI:15377"/>
        <dbReference type="ChEBI" id="CHEBI:15378"/>
        <dbReference type="ChEBI" id="CHEBI:59874"/>
        <dbReference type="ChEBI" id="CHEBI:78442"/>
        <dbReference type="ChEBI" id="CHEBI:138191"/>
        <dbReference type="EC" id="3.1.1.29"/>
    </reaction>
</comment>
<comment type="subcellular location">
    <subcellularLocation>
        <location evidence="1">Cytoplasm</location>
    </subcellularLocation>
</comment>
<comment type="similarity">
    <text evidence="1">Belongs to the PTH2 family.</text>
</comment>
<protein>
    <recommendedName>
        <fullName evidence="1">Peptidyl-tRNA hydrolase</fullName>
        <shortName evidence="1">PTH</shortName>
        <ecNumber evidence="1">3.1.1.29</ecNumber>
    </recommendedName>
</protein>
<dbReference type="EC" id="3.1.1.29" evidence="1"/>
<dbReference type="EMBL" id="AE009439">
    <property type="protein sequence ID" value="AAM02810.1"/>
    <property type="molecule type" value="Genomic_DNA"/>
</dbReference>
<dbReference type="RefSeq" id="WP_011019965.1">
    <property type="nucleotide sequence ID" value="NC_003551.1"/>
</dbReference>
<dbReference type="SMR" id="Q8TV04"/>
<dbReference type="FunCoup" id="Q8TV04">
    <property type="interactions" value="146"/>
</dbReference>
<dbReference type="STRING" id="190192.MK1597"/>
<dbReference type="PaxDb" id="190192-MK1597"/>
<dbReference type="EnsemblBacteria" id="AAM02810">
    <property type="protein sequence ID" value="AAM02810"/>
    <property type="gene ID" value="MK1597"/>
</dbReference>
<dbReference type="GeneID" id="1478192"/>
<dbReference type="KEGG" id="mka:MK1597"/>
<dbReference type="PATRIC" id="fig|190192.8.peg.1758"/>
<dbReference type="HOGENOM" id="CLU_073661_2_2_2"/>
<dbReference type="InParanoid" id="Q8TV04"/>
<dbReference type="OrthoDB" id="6075at2157"/>
<dbReference type="Proteomes" id="UP000001826">
    <property type="component" value="Chromosome"/>
</dbReference>
<dbReference type="GO" id="GO:0005829">
    <property type="term" value="C:cytosol"/>
    <property type="evidence" value="ECO:0007669"/>
    <property type="project" value="TreeGrafter"/>
</dbReference>
<dbReference type="GO" id="GO:0004045">
    <property type="term" value="F:peptidyl-tRNA hydrolase activity"/>
    <property type="evidence" value="ECO:0007669"/>
    <property type="project" value="UniProtKB-UniRule"/>
</dbReference>
<dbReference type="GO" id="GO:0006412">
    <property type="term" value="P:translation"/>
    <property type="evidence" value="ECO:0007669"/>
    <property type="project" value="UniProtKB-UniRule"/>
</dbReference>
<dbReference type="CDD" id="cd02430">
    <property type="entry name" value="PTH2"/>
    <property type="match status" value="1"/>
</dbReference>
<dbReference type="FunFam" id="3.40.1490.10:FF:000001">
    <property type="entry name" value="Peptidyl-tRNA hydrolase 2"/>
    <property type="match status" value="1"/>
</dbReference>
<dbReference type="Gene3D" id="3.40.1490.10">
    <property type="entry name" value="Bit1"/>
    <property type="match status" value="1"/>
</dbReference>
<dbReference type="HAMAP" id="MF_00628">
    <property type="entry name" value="Pept_tRNA_hydro_arch"/>
    <property type="match status" value="1"/>
</dbReference>
<dbReference type="InterPro" id="IPR023476">
    <property type="entry name" value="Pep_tRNA_hydro_II_dom_sf"/>
</dbReference>
<dbReference type="InterPro" id="IPR034759">
    <property type="entry name" value="Pept_tRNA_hydro_arch"/>
</dbReference>
<dbReference type="InterPro" id="IPR002833">
    <property type="entry name" value="PTH2"/>
</dbReference>
<dbReference type="NCBIfam" id="TIGR00283">
    <property type="entry name" value="arch_pth2"/>
    <property type="match status" value="1"/>
</dbReference>
<dbReference type="NCBIfam" id="NF003314">
    <property type="entry name" value="PRK04322.1"/>
    <property type="match status" value="1"/>
</dbReference>
<dbReference type="PANTHER" id="PTHR12649">
    <property type="entry name" value="PEPTIDYL-TRNA HYDROLASE 2"/>
    <property type="match status" value="1"/>
</dbReference>
<dbReference type="PANTHER" id="PTHR12649:SF11">
    <property type="entry name" value="PEPTIDYL-TRNA HYDROLASE 2, MITOCHONDRIAL"/>
    <property type="match status" value="1"/>
</dbReference>
<dbReference type="Pfam" id="PF01981">
    <property type="entry name" value="PTH2"/>
    <property type="match status" value="1"/>
</dbReference>
<dbReference type="SUPFAM" id="SSF102462">
    <property type="entry name" value="Peptidyl-tRNA hydrolase II"/>
    <property type="match status" value="1"/>
</dbReference>
<name>PTH_METKA</name>
<organism>
    <name type="scientific">Methanopyrus kandleri (strain AV19 / DSM 6324 / JCM 9639 / NBRC 100938)</name>
    <dbReference type="NCBI Taxonomy" id="190192"/>
    <lineage>
        <taxon>Archaea</taxon>
        <taxon>Methanobacteriati</taxon>
        <taxon>Methanobacteriota</taxon>
        <taxon>Methanomada group</taxon>
        <taxon>Methanopyri</taxon>
        <taxon>Methanopyrales</taxon>
        <taxon>Methanopyraceae</taxon>
        <taxon>Methanopyrus</taxon>
    </lineage>
</organism>